<sequence>MTTEIMQISLSHNPADARWGEKALISTNDQGVTIHLTSHDQLGGIQRAARKIDGQGIKQVKLAGEGWGLEQSWAFWQGFRGPKGQRSVVWAELPANEKTELEQRLKIIDWVRDTINAPAEDLGPEQLAKNAIDLLCAVSCDAVSYRITKGEDLREQNYAGIYTVGRGSDRAPVLLALDYNPTGNPDAPVMACLVGKGITFDSGGYSLKQSAFMDSMKSDMGGAATLTGALALAAARGLKERVKLYLCCADNMVSGNAFKLGDIIRYRNGKTVEIMNTDAEGRLVLADGLIDASEQNAPLIIDAATLTGAAKTALGNDYHALFSFDDELAQALLNSAHSEHELFWRLPLAEFHRSQLPSNFAELNNVAGGAYSAGASTAAAFLSHFVKNYQQGWLHIDCSATYRKSAVDQWSAGATGLGVRTVANLLLAQAKQ</sequence>
<accession>A4TMU7</accession>
<reference key="1">
    <citation type="submission" date="2007-02" db="EMBL/GenBank/DDBJ databases">
        <title>Complete sequence of chromosome of Yersinia pestis Pestoides F.</title>
        <authorList>
            <consortium name="US DOE Joint Genome Institute"/>
            <person name="Copeland A."/>
            <person name="Lucas S."/>
            <person name="Lapidus A."/>
            <person name="Barry K."/>
            <person name="Detter J.C."/>
            <person name="Glavina del Rio T."/>
            <person name="Hammon N."/>
            <person name="Israni S."/>
            <person name="Dalin E."/>
            <person name="Tice H."/>
            <person name="Pitluck S."/>
            <person name="Di Bartolo G."/>
            <person name="Chain P."/>
            <person name="Malfatti S."/>
            <person name="Shin M."/>
            <person name="Vergez L."/>
            <person name="Schmutz J."/>
            <person name="Larimer F."/>
            <person name="Land M."/>
            <person name="Hauser L."/>
            <person name="Worsham P."/>
            <person name="Chu M."/>
            <person name="Bearden S."/>
            <person name="Garcia E."/>
            <person name="Richardson P."/>
        </authorList>
    </citation>
    <scope>NUCLEOTIDE SEQUENCE [LARGE SCALE GENOMIC DNA]</scope>
    <source>
        <strain>Pestoides F</strain>
    </source>
</reference>
<keyword id="KW-0031">Aminopeptidase</keyword>
<keyword id="KW-0963">Cytoplasm</keyword>
<keyword id="KW-0378">Hydrolase</keyword>
<keyword id="KW-0464">Manganese</keyword>
<keyword id="KW-0479">Metal-binding</keyword>
<keyword id="KW-0645">Protease</keyword>
<feature type="chain" id="PRO_1000014893" description="Peptidase B">
    <location>
        <begin position="1"/>
        <end position="432"/>
    </location>
</feature>
<feature type="active site" evidence="1">
    <location>
        <position position="208"/>
    </location>
</feature>
<feature type="active site" evidence="1">
    <location>
        <position position="282"/>
    </location>
</feature>
<feature type="binding site" evidence="1">
    <location>
        <position position="196"/>
    </location>
    <ligand>
        <name>Mn(2+)</name>
        <dbReference type="ChEBI" id="CHEBI:29035"/>
        <label>2</label>
    </ligand>
</feature>
<feature type="binding site" evidence="1">
    <location>
        <position position="201"/>
    </location>
    <ligand>
        <name>Mn(2+)</name>
        <dbReference type="ChEBI" id="CHEBI:29035"/>
        <label>1</label>
    </ligand>
</feature>
<feature type="binding site" evidence="1">
    <location>
        <position position="201"/>
    </location>
    <ligand>
        <name>Mn(2+)</name>
        <dbReference type="ChEBI" id="CHEBI:29035"/>
        <label>2</label>
    </ligand>
</feature>
<feature type="binding site" evidence="1">
    <location>
        <position position="219"/>
    </location>
    <ligand>
        <name>Mn(2+)</name>
        <dbReference type="ChEBI" id="CHEBI:29035"/>
        <label>2</label>
    </ligand>
</feature>
<feature type="binding site" evidence="1">
    <location>
        <position position="278"/>
    </location>
    <ligand>
        <name>Mn(2+)</name>
        <dbReference type="ChEBI" id="CHEBI:29035"/>
        <label>1</label>
    </ligand>
</feature>
<feature type="binding site" evidence="1">
    <location>
        <position position="280"/>
    </location>
    <ligand>
        <name>Mn(2+)</name>
        <dbReference type="ChEBI" id="CHEBI:29035"/>
        <label>1</label>
    </ligand>
</feature>
<feature type="binding site" evidence="1">
    <location>
        <position position="280"/>
    </location>
    <ligand>
        <name>Mn(2+)</name>
        <dbReference type="ChEBI" id="CHEBI:29035"/>
        <label>2</label>
    </ligand>
</feature>
<comment type="function">
    <text evidence="1">Probably plays an important role in intracellular peptide degradation.</text>
</comment>
<comment type="catalytic activity">
    <reaction evidence="1">
        <text>Release of an N-terminal amino acid, Xaa, from a peptide or arylamide. Xaa is preferably Glu or Asp but may be other amino acids, including Leu, Met, His, Cys and Gln.</text>
        <dbReference type="EC" id="3.4.11.23"/>
    </reaction>
</comment>
<comment type="cofactor">
    <cofactor evidence="1">
        <name>Mn(2+)</name>
        <dbReference type="ChEBI" id="CHEBI:29035"/>
    </cofactor>
    <text evidence="1">Binds 2 manganese ions per subunit.</text>
</comment>
<comment type="subunit">
    <text evidence="1">Homohexamer.</text>
</comment>
<comment type="subcellular location">
    <subcellularLocation>
        <location evidence="1">Cytoplasm</location>
    </subcellularLocation>
</comment>
<comment type="similarity">
    <text evidence="1">Belongs to the peptidase M17 family.</text>
</comment>
<evidence type="ECO:0000255" key="1">
    <source>
        <dbReference type="HAMAP-Rule" id="MF_00504"/>
    </source>
</evidence>
<protein>
    <recommendedName>
        <fullName evidence="1">Peptidase B</fullName>
        <ecNumber evidence="1">3.4.11.23</ecNumber>
    </recommendedName>
    <alternativeName>
        <fullName evidence="1">Aminopeptidase B</fullName>
    </alternativeName>
</protein>
<organism>
    <name type="scientific">Yersinia pestis (strain Pestoides F)</name>
    <dbReference type="NCBI Taxonomy" id="386656"/>
    <lineage>
        <taxon>Bacteria</taxon>
        <taxon>Pseudomonadati</taxon>
        <taxon>Pseudomonadota</taxon>
        <taxon>Gammaproteobacteria</taxon>
        <taxon>Enterobacterales</taxon>
        <taxon>Yersiniaceae</taxon>
        <taxon>Yersinia</taxon>
    </lineage>
</organism>
<gene>
    <name evidence="1" type="primary">pepB</name>
    <name type="ordered locus">YPDSF_2234</name>
</gene>
<proteinExistence type="inferred from homology"/>
<name>PEPB_YERPP</name>
<dbReference type="EC" id="3.4.11.23" evidence="1"/>
<dbReference type="EMBL" id="CP000668">
    <property type="protein sequence ID" value="ABP40609.1"/>
    <property type="molecule type" value="Genomic_DNA"/>
</dbReference>
<dbReference type="RefSeq" id="WP_002209829.1">
    <property type="nucleotide sequence ID" value="NZ_CP009715.1"/>
</dbReference>
<dbReference type="SMR" id="A4TMU7"/>
<dbReference type="MEROPS" id="M17.004"/>
<dbReference type="GeneID" id="57975846"/>
<dbReference type="KEGG" id="ypp:YPDSF_2234"/>
<dbReference type="PATRIC" id="fig|386656.14.peg.3723"/>
<dbReference type="GO" id="GO:0005737">
    <property type="term" value="C:cytoplasm"/>
    <property type="evidence" value="ECO:0007669"/>
    <property type="project" value="UniProtKB-SubCell"/>
</dbReference>
<dbReference type="GO" id="GO:0030145">
    <property type="term" value="F:manganese ion binding"/>
    <property type="evidence" value="ECO:0007669"/>
    <property type="project" value="UniProtKB-UniRule"/>
</dbReference>
<dbReference type="GO" id="GO:0070006">
    <property type="term" value="F:metalloaminopeptidase activity"/>
    <property type="evidence" value="ECO:0007669"/>
    <property type="project" value="InterPro"/>
</dbReference>
<dbReference type="GO" id="GO:0006508">
    <property type="term" value="P:proteolysis"/>
    <property type="evidence" value="ECO:0007669"/>
    <property type="project" value="UniProtKB-UniRule"/>
</dbReference>
<dbReference type="CDD" id="cd00433">
    <property type="entry name" value="Peptidase_M17"/>
    <property type="match status" value="1"/>
</dbReference>
<dbReference type="FunFam" id="3.40.630.10:FF:000037">
    <property type="entry name" value="Peptidase B"/>
    <property type="match status" value="1"/>
</dbReference>
<dbReference type="Gene3D" id="3.40.630.10">
    <property type="entry name" value="Zn peptidases"/>
    <property type="match status" value="1"/>
</dbReference>
<dbReference type="HAMAP" id="MF_00504">
    <property type="entry name" value="Aminopeptidase_M17"/>
    <property type="match status" value="1"/>
</dbReference>
<dbReference type="InterPro" id="IPR011356">
    <property type="entry name" value="Leucine_aapep/pepB"/>
</dbReference>
<dbReference type="InterPro" id="IPR047620">
    <property type="entry name" value="M17_PepB-like_N"/>
</dbReference>
<dbReference type="InterPro" id="IPR008330">
    <property type="entry name" value="Pept_M17_PepB"/>
</dbReference>
<dbReference type="InterPro" id="IPR000819">
    <property type="entry name" value="Peptidase_M17_C"/>
</dbReference>
<dbReference type="NCBIfam" id="NF003450">
    <property type="entry name" value="PRK05015.1"/>
    <property type="match status" value="1"/>
</dbReference>
<dbReference type="PANTHER" id="PTHR11963">
    <property type="entry name" value="LEUCINE AMINOPEPTIDASE-RELATED"/>
    <property type="match status" value="1"/>
</dbReference>
<dbReference type="PANTHER" id="PTHR11963:SF20">
    <property type="entry name" value="PEPTIDASE B"/>
    <property type="match status" value="1"/>
</dbReference>
<dbReference type="Pfam" id="PF12404">
    <property type="entry name" value="DUF3663"/>
    <property type="match status" value="1"/>
</dbReference>
<dbReference type="Pfam" id="PF00883">
    <property type="entry name" value="Peptidase_M17"/>
    <property type="match status" value="1"/>
</dbReference>
<dbReference type="PIRSF" id="PIRSF036388">
    <property type="entry name" value="Ctsl_amnpptdse_B"/>
    <property type="match status" value="1"/>
</dbReference>
<dbReference type="PRINTS" id="PR00481">
    <property type="entry name" value="LAMNOPPTDASE"/>
</dbReference>
<dbReference type="SUPFAM" id="SSF53187">
    <property type="entry name" value="Zn-dependent exopeptidases"/>
    <property type="match status" value="1"/>
</dbReference>
<dbReference type="PROSITE" id="PS00631">
    <property type="entry name" value="CYTOSOL_AP"/>
    <property type="match status" value="1"/>
</dbReference>